<name>EFG1_SYNAS</name>
<accession>Q2LTB9</accession>
<keyword id="KW-0963">Cytoplasm</keyword>
<keyword id="KW-0251">Elongation factor</keyword>
<keyword id="KW-0342">GTP-binding</keyword>
<keyword id="KW-0547">Nucleotide-binding</keyword>
<keyword id="KW-0648">Protein biosynthesis</keyword>
<keyword id="KW-1185">Reference proteome</keyword>
<dbReference type="EMBL" id="CP000252">
    <property type="protein sequence ID" value="ABC77328.1"/>
    <property type="molecule type" value="Genomic_DNA"/>
</dbReference>
<dbReference type="RefSeq" id="WP_011417350.1">
    <property type="nucleotide sequence ID" value="NC_007759.1"/>
</dbReference>
<dbReference type="SMR" id="Q2LTB9"/>
<dbReference type="STRING" id="56780.SYN_01574"/>
<dbReference type="KEGG" id="sat:SYN_01574"/>
<dbReference type="eggNOG" id="COG0480">
    <property type="taxonomic scope" value="Bacteria"/>
</dbReference>
<dbReference type="HOGENOM" id="CLU_002794_4_1_7"/>
<dbReference type="InParanoid" id="Q2LTB9"/>
<dbReference type="OrthoDB" id="9760518at2"/>
<dbReference type="Proteomes" id="UP000001933">
    <property type="component" value="Chromosome"/>
</dbReference>
<dbReference type="GO" id="GO:0005737">
    <property type="term" value="C:cytoplasm"/>
    <property type="evidence" value="ECO:0007669"/>
    <property type="project" value="UniProtKB-SubCell"/>
</dbReference>
<dbReference type="GO" id="GO:0005525">
    <property type="term" value="F:GTP binding"/>
    <property type="evidence" value="ECO:0007669"/>
    <property type="project" value="UniProtKB-UniRule"/>
</dbReference>
<dbReference type="GO" id="GO:0003924">
    <property type="term" value="F:GTPase activity"/>
    <property type="evidence" value="ECO:0007669"/>
    <property type="project" value="InterPro"/>
</dbReference>
<dbReference type="GO" id="GO:0003746">
    <property type="term" value="F:translation elongation factor activity"/>
    <property type="evidence" value="ECO:0007669"/>
    <property type="project" value="UniProtKB-UniRule"/>
</dbReference>
<dbReference type="CDD" id="cd01886">
    <property type="entry name" value="EF-G"/>
    <property type="match status" value="1"/>
</dbReference>
<dbReference type="CDD" id="cd16262">
    <property type="entry name" value="EFG_III"/>
    <property type="match status" value="1"/>
</dbReference>
<dbReference type="CDD" id="cd01434">
    <property type="entry name" value="EFG_mtEFG1_IV"/>
    <property type="match status" value="1"/>
</dbReference>
<dbReference type="CDD" id="cd03713">
    <property type="entry name" value="EFG_mtEFG_C"/>
    <property type="match status" value="1"/>
</dbReference>
<dbReference type="CDD" id="cd04091">
    <property type="entry name" value="mtEFG1_II_like"/>
    <property type="match status" value="1"/>
</dbReference>
<dbReference type="FunFam" id="3.30.230.10:FF:000003">
    <property type="entry name" value="Elongation factor G"/>
    <property type="match status" value="1"/>
</dbReference>
<dbReference type="FunFam" id="3.30.70.240:FF:000001">
    <property type="entry name" value="Elongation factor G"/>
    <property type="match status" value="1"/>
</dbReference>
<dbReference type="FunFam" id="3.30.70.870:FF:000001">
    <property type="entry name" value="Elongation factor G"/>
    <property type="match status" value="1"/>
</dbReference>
<dbReference type="FunFam" id="3.40.50.300:FF:000029">
    <property type="entry name" value="Elongation factor G"/>
    <property type="match status" value="1"/>
</dbReference>
<dbReference type="FunFam" id="2.40.30.10:FF:000022">
    <property type="entry name" value="Elongation factor G, mitochondrial"/>
    <property type="match status" value="1"/>
</dbReference>
<dbReference type="Gene3D" id="3.30.230.10">
    <property type="match status" value="1"/>
</dbReference>
<dbReference type="Gene3D" id="3.30.70.240">
    <property type="match status" value="1"/>
</dbReference>
<dbReference type="Gene3D" id="3.30.70.870">
    <property type="entry name" value="Elongation Factor G (Translational Gtpase), domain 3"/>
    <property type="match status" value="1"/>
</dbReference>
<dbReference type="Gene3D" id="3.40.50.300">
    <property type="entry name" value="P-loop containing nucleotide triphosphate hydrolases"/>
    <property type="match status" value="1"/>
</dbReference>
<dbReference type="Gene3D" id="2.40.30.10">
    <property type="entry name" value="Translation factors"/>
    <property type="match status" value="1"/>
</dbReference>
<dbReference type="HAMAP" id="MF_00054_B">
    <property type="entry name" value="EF_G_EF_2_B"/>
    <property type="match status" value="1"/>
</dbReference>
<dbReference type="InterPro" id="IPR041095">
    <property type="entry name" value="EFG_II"/>
</dbReference>
<dbReference type="InterPro" id="IPR009022">
    <property type="entry name" value="EFG_III"/>
</dbReference>
<dbReference type="InterPro" id="IPR035647">
    <property type="entry name" value="EFG_III/V"/>
</dbReference>
<dbReference type="InterPro" id="IPR047872">
    <property type="entry name" value="EFG_IV"/>
</dbReference>
<dbReference type="InterPro" id="IPR035649">
    <property type="entry name" value="EFG_V"/>
</dbReference>
<dbReference type="InterPro" id="IPR000640">
    <property type="entry name" value="EFG_V-like"/>
</dbReference>
<dbReference type="InterPro" id="IPR004161">
    <property type="entry name" value="EFTu-like_2"/>
</dbReference>
<dbReference type="InterPro" id="IPR031157">
    <property type="entry name" value="G_TR_CS"/>
</dbReference>
<dbReference type="InterPro" id="IPR027417">
    <property type="entry name" value="P-loop_NTPase"/>
</dbReference>
<dbReference type="InterPro" id="IPR020568">
    <property type="entry name" value="Ribosomal_Su5_D2-typ_SF"/>
</dbReference>
<dbReference type="InterPro" id="IPR014721">
    <property type="entry name" value="Ribsml_uS5_D2-typ_fold_subgr"/>
</dbReference>
<dbReference type="InterPro" id="IPR005225">
    <property type="entry name" value="Small_GTP-bd"/>
</dbReference>
<dbReference type="InterPro" id="IPR000795">
    <property type="entry name" value="T_Tr_GTP-bd_dom"/>
</dbReference>
<dbReference type="InterPro" id="IPR009000">
    <property type="entry name" value="Transl_B-barrel_sf"/>
</dbReference>
<dbReference type="InterPro" id="IPR004540">
    <property type="entry name" value="Transl_elong_EFG/EF2"/>
</dbReference>
<dbReference type="InterPro" id="IPR005517">
    <property type="entry name" value="Transl_elong_EFG/EF2_IV"/>
</dbReference>
<dbReference type="NCBIfam" id="TIGR00484">
    <property type="entry name" value="EF-G"/>
    <property type="match status" value="1"/>
</dbReference>
<dbReference type="NCBIfam" id="NF009381">
    <property type="entry name" value="PRK12740.1-5"/>
    <property type="match status" value="1"/>
</dbReference>
<dbReference type="NCBIfam" id="TIGR00231">
    <property type="entry name" value="small_GTP"/>
    <property type="match status" value="1"/>
</dbReference>
<dbReference type="PANTHER" id="PTHR43636">
    <property type="entry name" value="ELONGATION FACTOR G, MITOCHONDRIAL"/>
    <property type="match status" value="1"/>
</dbReference>
<dbReference type="PANTHER" id="PTHR43636:SF2">
    <property type="entry name" value="ELONGATION FACTOR G, MITOCHONDRIAL"/>
    <property type="match status" value="1"/>
</dbReference>
<dbReference type="Pfam" id="PF00679">
    <property type="entry name" value="EFG_C"/>
    <property type="match status" value="1"/>
</dbReference>
<dbReference type="Pfam" id="PF14492">
    <property type="entry name" value="EFG_III"/>
    <property type="match status" value="1"/>
</dbReference>
<dbReference type="Pfam" id="PF03764">
    <property type="entry name" value="EFG_IV"/>
    <property type="match status" value="1"/>
</dbReference>
<dbReference type="Pfam" id="PF00009">
    <property type="entry name" value="GTP_EFTU"/>
    <property type="match status" value="1"/>
</dbReference>
<dbReference type="Pfam" id="PF03144">
    <property type="entry name" value="GTP_EFTU_D2"/>
    <property type="match status" value="1"/>
</dbReference>
<dbReference type="PRINTS" id="PR00315">
    <property type="entry name" value="ELONGATNFCT"/>
</dbReference>
<dbReference type="SMART" id="SM00838">
    <property type="entry name" value="EFG_C"/>
    <property type="match status" value="1"/>
</dbReference>
<dbReference type="SMART" id="SM00889">
    <property type="entry name" value="EFG_IV"/>
    <property type="match status" value="1"/>
</dbReference>
<dbReference type="SUPFAM" id="SSF54980">
    <property type="entry name" value="EF-G C-terminal domain-like"/>
    <property type="match status" value="2"/>
</dbReference>
<dbReference type="SUPFAM" id="SSF52540">
    <property type="entry name" value="P-loop containing nucleoside triphosphate hydrolases"/>
    <property type="match status" value="1"/>
</dbReference>
<dbReference type="SUPFAM" id="SSF54211">
    <property type="entry name" value="Ribosomal protein S5 domain 2-like"/>
    <property type="match status" value="1"/>
</dbReference>
<dbReference type="SUPFAM" id="SSF50447">
    <property type="entry name" value="Translation proteins"/>
    <property type="match status" value="1"/>
</dbReference>
<dbReference type="PROSITE" id="PS00301">
    <property type="entry name" value="G_TR_1"/>
    <property type="match status" value="1"/>
</dbReference>
<dbReference type="PROSITE" id="PS51722">
    <property type="entry name" value="G_TR_2"/>
    <property type="match status" value="1"/>
</dbReference>
<evidence type="ECO:0000255" key="1">
    <source>
        <dbReference type="HAMAP-Rule" id="MF_00054"/>
    </source>
</evidence>
<sequence length="695" mass="76357">MKNDIKKVRNIGISAHIDSGKTTLTERILFYTKRIHAMHDVKGKDGVGATMDSMELERERGITISSAATFCTWGDHEVNIIDTPGHVDFTIEVERALRVLDGAILVLCAVGGVQSQSITVDAQMKRYKVPCVAFVNKCDRSGANPARVVEQLKTRLGHNALLMQLPIGLEADFQGIVDLISMKAVYFDGAGGELLRTEAVPESLLPEAISRREELIDSVSLFSDSLTEAILEGTEISEVMIMEAVRQGTLERKITPVFIGSAYKNKGIQPLLDAVTRYLPCPADIENSALDLSREEAPVQLTSNTEDPVVALAFKLEDGIYGQLTYIRVYQGILSRGATVVNARDGKKVRIGRLVRMHADQMEDIEAIHAGYIGALFGLECQSGDTFAAQGLNLAMTSMFVPEPVISLAIVPKDKKSMVNMSKALNRFTKEDPTFRTHLDPETSETIIEGMGELHLDIYVERIRREYNAEVTTGNPRVAYRETITQKAAFNYTHRKQTGGSGQYGRVAGYIEPLSDEDFLFENKITGGAIPTQFIPACEKGFRMSMAKGPKMEFPVTGVKVVIDDGAFHAVDSSDMAFQAAARGAFREAYNKAKPVILEPIMKVVVETPNEFQGAVMGLLNQRRGMIVGTQDEGQTCVIEAQTPLAEMFGFSTVIRSATQGKAQFTMEFSAYRQVPQSIAEKITEEVAKRKKSAA</sequence>
<proteinExistence type="inferred from homology"/>
<organism>
    <name type="scientific">Syntrophus aciditrophicus (strain SB)</name>
    <dbReference type="NCBI Taxonomy" id="56780"/>
    <lineage>
        <taxon>Bacteria</taxon>
        <taxon>Pseudomonadati</taxon>
        <taxon>Thermodesulfobacteriota</taxon>
        <taxon>Syntrophia</taxon>
        <taxon>Syntrophales</taxon>
        <taxon>Syntrophaceae</taxon>
        <taxon>Syntrophus</taxon>
    </lineage>
</organism>
<protein>
    <recommendedName>
        <fullName evidence="1">Elongation factor G 1</fullName>
        <shortName evidence="1">EF-G 1</shortName>
    </recommendedName>
</protein>
<comment type="function">
    <text evidence="1">Catalyzes the GTP-dependent ribosomal translocation step during translation elongation. During this step, the ribosome changes from the pre-translocational (PRE) to the post-translocational (POST) state as the newly formed A-site-bound peptidyl-tRNA and P-site-bound deacylated tRNA move to the P and E sites, respectively. Catalyzes the coordinated movement of the two tRNA molecules, the mRNA and conformational changes in the ribosome.</text>
</comment>
<comment type="subcellular location">
    <subcellularLocation>
        <location evidence="1">Cytoplasm</location>
    </subcellularLocation>
</comment>
<comment type="similarity">
    <text evidence="1">Belongs to the TRAFAC class translation factor GTPase superfamily. Classic translation factor GTPase family. EF-G/EF-2 subfamily.</text>
</comment>
<reference key="1">
    <citation type="journal article" date="2007" name="Proc. Natl. Acad. Sci. U.S.A.">
        <title>The genome of Syntrophus aciditrophicus: life at the thermodynamic limit of microbial growth.</title>
        <authorList>
            <person name="McInerney M.J."/>
            <person name="Rohlin L."/>
            <person name="Mouttaki H."/>
            <person name="Kim U."/>
            <person name="Krupp R.S."/>
            <person name="Rios-Hernandez L."/>
            <person name="Sieber J."/>
            <person name="Struchtemeyer C.G."/>
            <person name="Bhattacharyya A."/>
            <person name="Campbell J.W."/>
            <person name="Gunsalus R.P."/>
        </authorList>
    </citation>
    <scope>NUCLEOTIDE SEQUENCE [LARGE SCALE GENOMIC DNA]</scope>
    <source>
        <strain>SB</strain>
    </source>
</reference>
<feature type="chain" id="PRO_0000263528" description="Elongation factor G 1">
    <location>
        <begin position="1"/>
        <end position="695"/>
    </location>
</feature>
<feature type="domain" description="tr-type G">
    <location>
        <begin position="6"/>
        <end position="284"/>
    </location>
</feature>
<feature type="binding site" evidence="1">
    <location>
        <begin position="15"/>
        <end position="22"/>
    </location>
    <ligand>
        <name>GTP</name>
        <dbReference type="ChEBI" id="CHEBI:37565"/>
    </ligand>
</feature>
<feature type="binding site" evidence="1">
    <location>
        <begin position="82"/>
        <end position="86"/>
    </location>
    <ligand>
        <name>GTP</name>
        <dbReference type="ChEBI" id="CHEBI:37565"/>
    </ligand>
</feature>
<feature type="binding site" evidence="1">
    <location>
        <begin position="136"/>
        <end position="139"/>
    </location>
    <ligand>
        <name>GTP</name>
        <dbReference type="ChEBI" id="CHEBI:37565"/>
    </ligand>
</feature>
<gene>
    <name evidence="1" type="primary">fusA1</name>
    <name type="ordered locus">SYNAS_14490</name>
    <name type="ORF">SYN_01574</name>
</gene>